<name>MYBY1_SORBI</name>
<accession>Q4G2I2</accession>
<evidence type="ECO:0000255" key="1">
    <source>
        <dbReference type="PROSITE-ProRule" id="PRU00625"/>
    </source>
</evidence>
<evidence type="ECO:0000256" key="2">
    <source>
        <dbReference type="SAM" id="MobiDB-lite"/>
    </source>
</evidence>
<evidence type="ECO:0000269" key="3">
    <source>
    </source>
</evidence>
<evidence type="ECO:0000269" key="4">
    <source>
    </source>
</evidence>
<evidence type="ECO:0000269" key="5">
    <source>
    </source>
</evidence>
<evidence type="ECO:0000269" key="6">
    <source>
    </source>
</evidence>
<evidence type="ECO:0000269" key="7">
    <source>
    </source>
</evidence>
<evidence type="ECO:0000269" key="8">
    <source ref="3"/>
</evidence>
<evidence type="ECO:0000269" key="9">
    <source ref="4"/>
</evidence>
<evidence type="ECO:0000303" key="10">
    <source>
    </source>
</evidence>
<evidence type="ECO:0000303" key="11">
    <source>
    </source>
</evidence>
<evidence type="ECO:0000303" key="12">
    <source>
    </source>
</evidence>
<evidence type="ECO:0000303" key="13">
    <source>
    </source>
</evidence>
<evidence type="ECO:0000303" key="14">
    <source ref="3"/>
</evidence>
<evidence type="ECO:0000303" key="15">
    <source ref="4"/>
</evidence>
<evidence type="ECO:0000305" key="16"/>
<evidence type="ECO:0000312" key="17">
    <source>
        <dbReference type="EMBL" id="AAX44239.1"/>
    </source>
</evidence>
<feature type="chain" id="PRO_0000456690" description="Transcription factor Y1">
    <location>
        <begin position="1"/>
        <end position="383"/>
    </location>
</feature>
<feature type="domain" description="HTH myb-type 1" evidence="1">
    <location>
        <begin position="9"/>
        <end position="61"/>
    </location>
</feature>
<feature type="domain" description="HTH myb-type 2" evidence="1">
    <location>
        <begin position="62"/>
        <end position="116"/>
    </location>
</feature>
<feature type="DNA-binding region" description="H-T-H motif" evidence="1">
    <location>
        <begin position="37"/>
        <end position="61"/>
    </location>
</feature>
<feature type="DNA-binding region" description="H-T-H motif" evidence="1">
    <location>
        <begin position="89"/>
        <end position="112"/>
    </location>
</feature>
<feature type="region of interest" description="Disordered" evidence="2">
    <location>
        <begin position="136"/>
        <end position="250"/>
    </location>
</feature>
<feature type="compositionally biased region" description="Low complexity" evidence="2">
    <location>
        <begin position="155"/>
        <end position="170"/>
    </location>
</feature>
<feature type="compositionally biased region" description="Low complexity" evidence="2">
    <location>
        <begin position="191"/>
        <end position="207"/>
    </location>
</feature>
<protein>
    <recommendedName>
        <fullName evidence="10 11 12 14 15">Transcription factor Y1</fullName>
    </recommendedName>
    <alternativeName>
        <fullName evidence="16">Myb-related protein Y1</fullName>
    </alternativeName>
    <alternativeName>
        <fullName evidence="11 12">R2R3 MYB transcription factor Y1</fullName>
    </alternativeName>
    <alternativeName>
        <fullName evidence="10 11 12 13 15 17">Yellow seed1</fullName>
    </alternativeName>
</protein>
<comment type="function">
    <text evidence="4 5 6 7 8 9">Transcription factor involved in regulating the biosynthetic pathway of flavan-4-ol-derived red phlobaphene and red-brown 3-deoxyanthocyanidin (3-DA) pigments (PubMed:25647576, PubMed:30911880, Ref.3, Ref.4). Regulates transcription of chalcone synthase, chalcone isomerase, dihydroflavonol reductase and flavonoid 3'-hydroxylase genes required for the phlobaphene and 3-DA biosynthesis (PubMed:16429259, PubMed:20083611). Transcription of these genes is activated in mesocotyls in response to ingress of non-pathogenic fungus C.heterostrophus (PubMed:20083611). Regulates the production of 3-DA phytoalexins (luteolinidin, 5-methoxyluteolinidin, apigeninidin and 7-methoxyapigeninidin) in mesocotyls in response to C.heterostrophus and corn leaf aphid (CLA) R.maidis (PubMed:20083611, PubMed:30911880, Ref.3). Involved in resistance against anthracnose leaf blight (ALB) caused by the pathogenic C.sublineolum fungus by inducing the production of 3-DA phytoalexins (PubMed:20083611, PubMed:25647576, PubMed:30911880). Confers resistance, also by inducing the production of 3-DA phytoalexins, against CLA R.maidis, which is an insect and a pest (PubMed:30911880).</text>
</comment>
<comment type="pathway">
    <text evidence="4 5 6 7 8 9">Pigment biosynthesis.</text>
</comment>
<comment type="subcellular location">
    <subcellularLocation>
        <location evidence="1 16">Nucleus</location>
    </subcellularLocation>
</comment>
<comment type="developmental stage">
    <text evidence="4 9">Highly expressed in seeds and glumes at 15 days after anthesis (daa). Highest expression in pericarp tissue of seeds at 20 daa. Moderately expressed in flag leaf at the soft dough seed stage. Weakly expressed in young seedling leaves 1, 3 and 5. Hardly detectable in inflorescence at 0 daa. Not expressed at the soft dough stage in old leaves near the bottom of the plant. Expression shows a progressive increase from the bottom to the top of the plant coinciding with the accumulation of leaf pigments.</text>
</comment>
<comment type="induction">
    <text evidence="5">By inoculation with non-pathogenic fungus C.heterostrophus. Expressed as early as 3 hours post inoculation (hpi) and accumulates thereafter, with the highest expression 24 hpi.</text>
</comment>
<comment type="disruption phenotype">
    <text evidence="3 4 5 7 8 9">Lack of this gene leads to loss of visible red pigments in pericarp of the seeds, glumes and mature leaves, all of which are white as a result (PubMed:20083611, PubMed:30911880, Ref.4). Leads to loss of flavan-4-ols production in developing seeds and loss of 3-deoxyanthocyanidins (3-DAs) in seeds at 24 days after anthesis (daa) (Ref.4). A variegated pigmentation phenotype in seed pericarp and leaves is produced by an insertion of a transposon called candystripe1 (cs1) into this gene. Spontaneous excision of the transposon restores normal function of this gene (PubMed:10611384, PubMed:16429259, PubMed:20083611, Ref.3, Ref.4). Cs1 causes variability in pigmentation of the mesocotyls in repsonse to C.heterostrophus, although this fungus is not pathogenic to sorghum (Ref.3). Plants display severe symptoms typical of anthracnose disease after being infected with the pathogenic C.sublineolum fungus. Pigmented lesions appear 4 days post inoculation (dpi) of the fungus at the sites of primary infection. The lesions progress and eventually coalesce leading to necrosis of the infected leaves. Acervuli appear in the lesions at this stage (PubMed:20083611).</text>
</comment>
<comment type="biotechnology">
    <text evidence="6">This gene has been successfully introduced to maize resulting in transgenic plants that show resistance to fungal pathogens C.graminicola and C.heterostrophus, which cause anthracnose leaf blight (ALB) and southern corn leaf blight, respectively, in this important cereal crop. The enhanced resistance of the maize plants is due to production of 3-deoxyanthocyanidin (3-DA) phytoalexins, specifically luteolinidin, and the higher levels of preformed flavonoids, especially flavan-4-ols, induced by this gene.</text>
</comment>
<organism evidence="17">
    <name type="scientific">Sorghum bicolor</name>
    <name type="common">Sorghum</name>
    <name type="synonym">Sorghum vulgare</name>
    <dbReference type="NCBI Taxonomy" id="4558"/>
    <lineage>
        <taxon>Eukaryota</taxon>
        <taxon>Viridiplantae</taxon>
        <taxon>Streptophyta</taxon>
        <taxon>Embryophyta</taxon>
        <taxon>Tracheophyta</taxon>
        <taxon>Spermatophyta</taxon>
        <taxon>Magnoliopsida</taxon>
        <taxon>Liliopsida</taxon>
        <taxon>Poales</taxon>
        <taxon>Poaceae</taxon>
        <taxon>PACMAD clade</taxon>
        <taxon>Panicoideae</taxon>
        <taxon>Andropogonodae</taxon>
        <taxon>Andropogoneae</taxon>
        <taxon>Sorghinae</taxon>
        <taxon>Sorghum</taxon>
    </lineage>
</organism>
<sequence length="383" mass="41135">MGRAPCCDKVGLKRGRWTAEEDQILANYIAEHGEGSWRSLPKNAGLLRCGKSCRLRWINYLRADVKRGNISKEEEDIIIKLHATLGNRWSLIASHFPGRTDNEIKNYWNSHLSRQIHTYRRKYTAAPDTTVIIDMSKLHSAEKRRGGRTPGWSPKSSSANTTTNTTSSKTNKSKETDPGPGLKSACDAKGASSPPTAATTTSAASSPRHSDGARSAVVDPDPNQPNSSSGSTAEGPCSGEDATGPWELDPIDLGDLWEAESEIDALMSMDAPLEGFDAVVGEAQAQVDDLFDMDMDWDGFAAHLWGGPEQNDHIAELQQAAEPQATAAACTPNEHEPQVAAAAAACTPDEHEPQAAAAAAAATCTPDEHGLEAFETWLLSDSF</sequence>
<reference evidence="17" key="1">
    <citation type="journal article" date="2006" name="Plant Mol. Biol.">
        <title>Comparative structural and functional characterization of sorghum and maize duplications containing orthologous myb transcription regulators of 3-deoxyflavonoid biosynthesis.</title>
        <authorList>
            <person name="Boddu J."/>
            <person name="Jiang C."/>
            <person name="Sangar V."/>
            <person name="Olson T."/>
            <person name="Peterson T."/>
            <person name="Chopra S."/>
        </authorList>
    </citation>
    <scope>NUCLEOTIDE SEQUENCE [GENOMIC DNA]</scope>
    <scope>FUNCTION</scope>
    <scope>PATHWAY</scope>
    <scope>DEVELOPMENTAL STAGE</scope>
    <scope>DISRUPTION PHENOTYPE</scope>
    <scope>PHYLOGENETIC ANALYSIS</scope>
</reference>
<reference key="2">
    <citation type="journal article" date="1999" name="Proc. Natl. Acad. Sci. U.S.A.">
        <title>Molecular characterization of a mutable pigmentation phenotype and isolation of the first active transposable element from Sorghum bicolor.</title>
        <authorList>
            <person name="Chopra S."/>
            <person name="Brendel V."/>
            <person name="Zhang J."/>
            <person name="Axtell J.D."/>
            <person name="Peterson T."/>
        </authorList>
    </citation>
    <scope>DISRUPTION PHENOTYPE</scope>
</reference>
<reference key="3">
    <citation type="journal article" date="2002" name="Physiol. Mol. Plant Pathol.">
        <title>Excision of the Candystripe1 transposon from a hyper-mutable Y1-cs allele shows that the sorghumY1 gene controls the biosynthesis of both 3-deoxyanthocyanidin phytoalexins and phlobaphene pigments.</title>
        <authorList>
            <person name="Chopra S."/>
            <person name="Gevens A."/>
            <person name="Svabek C."/>
            <person name="Wood K.V."/>
            <person name="Peterson T."/>
            <person name="Nicholson R.L."/>
        </authorList>
    </citation>
    <scope>FUNCTION</scope>
    <scope>PATHWAY</scope>
    <scope>DISRUPTION PHENOTYPE</scope>
</reference>
<reference key="4">
    <citation type="journal article" date="2005" name="Plant Sci.">
        <title>Characterization of a deletion allele of a sorghum Myb gene yellow seed1 showing loss of 3-deoxyflavonoids.</title>
        <authorList>
            <person name="Boddu J."/>
            <person name="Svabek C."/>
            <person name="Ibraheem F."/>
            <person name="Jones A.D."/>
            <person name="Chopra S."/>
        </authorList>
        <dbReference type="AGRICOLA" id="IND43738392"/>
    </citation>
    <scope>FUNCTION</scope>
    <scope>PATHWAY</scope>
    <scope>DEVELOPMENTAL STAGE</scope>
    <scope>DISRUPTION PHENOTYPE</scope>
</reference>
<reference key="5">
    <citation type="journal article" date="2010" name="Genetics">
        <title>Flavonoid phytoalexin-dependent resistance to anthracnose leaf blight requires a functional yellow seed1 in Sorghum bicolor.</title>
        <authorList>
            <person name="Ibraheem F."/>
            <person name="Gaffoor I."/>
            <person name="Chopra S."/>
        </authorList>
    </citation>
    <scope>FUNCTION</scope>
    <scope>PATHWAY</scope>
    <scope>INDUCTION</scope>
    <scope>DISRUPTION PHENOTYPE</scope>
</reference>
<reference key="6">
    <citation type="journal article" date="2015" name="Molecules">
        <title>A sorghum MYB transcription factor induces 3-deoxyanthocyanidins and enhances resistance against leaf blights in maize.</title>
        <authorList>
            <person name="Ibraheem F."/>
            <person name="Gaffoor I."/>
            <person name="Tan Q."/>
            <person name="Shyu C.R."/>
            <person name="Chopra S."/>
        </authorList>
    </citation>
    <scope>FUNCTION</scope>
    <scope>PATHWAY</scope>
    <scope>BIOTECHNOLOGY</scope>
</reference>
<reference key="7">
    <citation type="journal article" date="2019" name="J. Chem. Ecol.">
        <title>Sorghum 3-Deoxyanthocyanidin Flavonoids Confer Resistance against Corn Leaf Aphid.</title>
        <authorList>
            <person name="Kariyat R.R."/>
            <person name="Gaffoor I."/>
            <person name="Sattar S."/>
            <person name="Dixon C.W."/>
            <person name="Frock N."/>
            <person name="Moen J."/>
            <person name="De Moraes C.M."/>
            <person name="Mescher M.C."/>
            <person name="Thompson G.A."/>
            <person name="Chopra S."/>
        </authorList>
    </citation>
    <scope>FUNCTION</scope>
    <scope>PATHWAY</scope>
    <scope>DISRUPTION PHENOTYPE</scope>
</reference>
<dbReference type="EMBL" id="AY860968">
    <property type="protein sequence ID" value="AAX44239.1"/>
    <property type="molecule type" value="Genomic_DNA"/>
</dbReference>
<dbReference type="SMR" id="Q4G2I2"/>
<dbReference type="GO" id="GO:0005634">
    <property type="term" value="C:nucleus"/>
    <property type="evidence" value="ECO:0007669"/>
    <property type="project" value="UniProtKB-SubCell"/>
</dbReference>
<dbReference type="GO" id="GO:0003700">
    <property type="term" value="F:DNA-binding transcription factor activity"/>
    <property type="evidence" value="ECO:0000314"/>
    <property type="project" value="UniProtKB"/>
</dbReference>
<dbReference type="GO" id="GO:0043565">
    <property type="term" value="F:sequence-specific DNA binding"/>
    <property type="evidence" value="ECO:0000314"/>
    <property type="project" value="UniProtKB"/>
</dbReference>
<dbReference type="GO" id="GO:0050832">
    <property type="term" value="P:defense response to fungus"/>
    <property type="evidence" value="ECO:0000314"/>
    <property type="project" value="UniProtKB"/>
</dbReference>
<dbReference type="GO" id="GO:0009813">
    <property type="term" value="P:flavonoid biosynthetic process"/>
    <property type="evidence" value="ECO:0007669"/>
    <property type="project" value="UniProtKB-KW"/>
</dbReference>
<dbReference type="GO" id="GO:0051559">
    <property type="term" value="P:phlobaphene biosynthetic process"/>
    <property type="evidence" value="ECO:0000315"/>
    <property type="project" value="UniProtKB"/>
</dbReference>
<dbReference type="GO" id="GO:0043480">
    <property type="term" value="P:pigment accumulation in tissues"/>
    <property type="evidence" value="ECO:0000315"/>
    <property type="project" value="UniProtKB"/>
</dbReference>
<dbReference type="GO" id="GO:0043477">
    <property type="term" value="P:pigment biosynthetic process involved in pigment accumulation"/>
    <property type="evidence" value="ECO:0000314"/>
    <property type="project" value="UniProtKB"/>
</dbReference>
<dbReference type="GO" id="GO:1900367">
    <property type="term" value="P:positive regulation of defense response to insect"/>
    <property type="evidence" value="ECO:0000314"/>
    <property type="project" value="UniProtKB"/>
</dbReference>
<dbReference type="GO" id="GO:0045893">
    <property type="term" value="P:positive regulation of DNA-templated transcription"/>
    <property type="evidence" value="ECO:0000314"/>
    <property type="project" value="UniProtKB"/>
</dbReference>
<dbReference type="GO" id="GO:0052322">
    <property type="term" value="P:positive regulation of phytoalexin biosynthetic process"/>
    <property type="evidence" value="ECO:0000314"/>
    <property type="project" value="UniProtKB"/>
</dbReference>
<dbReference type="CDD" id="cd00167">
    <property type="entry name" value="SANT"/>
    <property type="match status" value="2"/>
</dbReference>
<dbReference type="FunFam" id="1.10.10.60:FF:000121">
    <property type="entry name" value="Myb transcription factor"/>
    <property type="match status" value="1"/>
</dbReference>
<dbReference type="FunFam" id="1.10.10.60:FF:000231">
    <property type="entry name" value="Myb transcription factor"/>
    <property type="match status" value="1"/>
</dbReference>
<dbReference type="Gene3D" id="1.10.10.60">
    <property type="entry name" value="Homeodomain-like"/>
    <property type="match status" value="2"/>
</dbReference>
<dbReference type="InterPro" id="IPR009057">
    <property type="entry name" value="Homeodomain-like_sf"/>
</dbReference>
<dbReference type="InterPro" id="IPR010588">
    <property type="entry name" value="Myb-rel_proteinP/Y1_C"/>
</dbReference>
<dbReference type="InterPro" id="IPR017930">
    <property type="entry name" value="Myb_dom"/>
</dbReference>
<dbReference type="InterPro" id="IPR015495">
    <property type="entry name" value="Myb_TF_plants"/>
</dbReference>
<dbReference type="InterPro" id="IPR001005">
    <property type="entry name" value="SANT/Myb"/>
</dbReference>
<dbReference type="PANTHER" id="PTHR47999:SF6">
    <property type="entry name" value="MYB-RELATED PROTEIN P"/>
    <property type="match status" value="1"/>
</dbReference>
<dbReference type="PANTHER" id="PTHR47999">
    <property type="entry name" value="TRANSCRIPTION FACTOR MYB8-RELATED-RELATED"/>
    <property type="match status" value="1"/>
</dbReference>
<dbReference type="Pfam" id="PF00249">
    <property type="entry name" value="Myb_DNA-binding"/>
    <property type="match status" value="2"/>
</dbReference>
<dbReference type="Pfam" id="PF06640">
    <property type="entry name" value="P_C"/>
    <property type="match status" value="1"/>
</dbReference>
<dbReference type="SMART" id="SM00717">
    <property type="entry name" value="SANT"/>
    <property type="match status" value="2"/>
</dbReference>
<dbReference type="SUPFAM" id="SSF46689">
    <property type="entry name" value="Homeodomain-like"/>
    <property type="match status" value="1"/>
</dbReference>
<dbReference type="PROSITE" id="PS51294">
    <property type="entry name" value="HTH_MYB"/>
    <property type="match status" value="2"/>
</dbReference>
<dbReference type="PROSITE" id="PS50090">
    <property type="entry name" value="MYB_LIKE"/>
    <property type="match status" value="2"/>
</dbReference>
<proteinExistence type="evidence at protein level"/>
<keyword id="KW-0238">DNA-binding</keyword>
<keyword id="KW-0284">Flavonoid biosynthesis</keyword>
<keyword id="KW-0539">Nucleus</keyword>
<keyword id="KW-0611">Plant defense</keyword>
<keyword id="KW-0677">Repeat</keyword>
<keyword id="KW-0804">Transcription</keyword>
<keyword id="KW-0805">Transcription regulation</keyword>
<gene>
    <name evidence="10 11 12 13 14 15 17" type="primary">y1</name>
</gene>